<sequence>MSNKEEHVDETSASGVKEVSSIAARHDNGYAPSLITSTSGMDSFQSHALLNDPTLIEDYSDIINNRPTSGSKLTLGNEDSESMGGSVVVTPTSNKSSPFNSKLNILSNAAEKGHDVLRNRDDDKELEEENVEKHMHSNSKRDQRHYKENSSELPDSYDYSDSEFEDNLERRLQEIETDSVDSADKDEVHFSVNNTMNPDVDDFSDGLKYAISEDEDEEENYSDDDDFDRKFQDSGFQGEKDDLEEENDDYQPLSPPRELDPDKLYALYAFNGHDSSHCQLGQDEPCILLNDQDAYWWLVKRITDGKIGFAPAEILETFPERLARLNCWKNENMSSQSVASSDSKDDSISSGNKNQSDAESIIPTPALNGYGKGNKSVSFNDVVGYADRFIDDAIEDTSLDSNDDGGEGNGQSYDDDVDNDKETKVTHRDEYTEAKLNFGKFQDDDTSDVVSDVSFSTSLNTPLNVKKVRRQDNKNESEPKTSSSKDREDDYNANRYVGQEKSEPVDSDYDTDLKKVFEAPRMPFANGMAKSDSQNSLSTIGEFSPSSSEWTNESPSTPIVEESSSIPSSRAIKDISQYIHAKSKIEETTNVENTEGQIQASLGSSGGMANQTDAEQPKEELEKHHSTPEEEKQSTLSLHSSSEEDFYMDEQRAVSSASINSSLSGSRALSNTNMSDPASKPNSLVQHLYAPVFDRMDVLMKQLDEIIRK</sequence>
<protein>
    <recommendedName>
        <fullName>Bud site selection protein 14</fullName>
    </recommendedName>
</protein>
<reference key="1">
    <citation type="journal article" date="1994" name="Yeast">
        <title>Sequencing of chromosome I of Saccharomyces cerevisiae: analysis of the 42 kbp SPO7-CENI-CDC15 region.</title>
        <authorList>
            <person name="Clark M.W."/>
            <person name="Keng T."/>
            <person name="Storms R.K."/>
            <person name="Zhong W.-W."/>
            <person name="Fortin N."/>
            <person name="Zeng B."/>
            <person name="Delaney S."/>
            <person name="Ouellette B.F.F."/>
            <person name="Barton A.B."/>
            <person name="Kaback D.B."/>
            <person name="Bussey H."/>
        </authorList>
    </citation>
    <scope>NUCLEOTIDE SEQUENCE [GENOMIC DNA]</scope>
    <source>
        <strain>ATCC 204511 / S288c / AB972</strain>
    </source>
</reference>
<reference key="2">
    <citation type="journal article" date="1995" name="Proc. Natl. Acad. Sci. U.S.A.">
        <title>The nucleotide sequence of chromosome I from Saccharomyces cerevisiae.</title>
        <authorList>
            <person name="Bussey H."/>
            <person name="Kaback D.B."/>
            <person name="Zhong W.-W."/>
            <person name="Vo D.H."/>
            <person name="Clark M.W."/>
            <person name="Fortin N."/>
            <person name="Hall J."/>
            <person name="Ouellette B.F.F."/>
            <person name="Keng T."/>
            <person name="Barton A.B."/>
            <person name="Su Y."/>
            <person name="Davies C.J."/>
            <person name="Storms R.K."/>
        </authorList>
    </citation>
    <scope>NUCLEOTIDE SEQUENCE [LARGE SCALE GENOMIC DNA]</scope>
    <source>
        <strain>ATCC 204508 / S288c</strain>
    </source>
</reference>
<reference key="3">
    <citation type="submission" date="2004-01" db="EMBL/GenBank/DDBJ databases">
        <authorList>
            <person name="Fisk D."/>
            <person name="Cherry J.M."/>
        </authorList>
    </citation>
    <scope>SEQUENCE REVISION TO C-TERMINUS</scope>
</reference>
<reference key="4">
    <citation type="journal article" date="2014" name="G3 (Bethesda)">
        <title>The reference genome sequence of Saccharomyces cerevisiae: Then and now.</title>
        <authorList>
            <person name="Engel S.R."/>
            <person name="Dietrich F.S."/>
            <person name="Fisk D.G."/>
            <person name="Binkley G."/>
            <person name="Balakrishnan R."/>
            <person name="Costanzo M.C."/>
            <person name="Dwight S.S."/>
            <person name="Hitz B.C."/>
            <person name="Karra K."/>
            <person name="Nash R.S."/>
            <person name="Weng S."/>
            <person name="Wong E.D."/>
            <person name="Lloyd P."/>
            <person name="Skrzypek M.S."/>
            <person name="Miyasato S.R."/>
            <person name="Simison M."/>
            <person name="Cherry J.M."/>
        </authorList>
    </citation>
    <scope>GENOME REANNOTATION</scope>
    <scope>SEQUENCE REVISION TO 439; 573-595 AND 609</scope>
    <source>
        <strain>ATCC 204508 / S288c</strain>
    </source>
</reference>
<reference key="5">
    <citation type="journal article" date="1991" name="Nucleic Acids Res.">
        <title>A directed DNA sequencing strategy based upon Tn3 transposon mutagenesis: application to the ADE1 locus on Saccharomyces cerevisiae chromosome I.</title>
        <authorList>
            <person name="Davies C.J."/>
            <person name="Hutchison C.A. III"/>
        </authorList>
    </citation>
    <scope>NUCLEOTIDE SEQUENCE [GENOMIC DNA] OF 1-142</scope>
</reference>
<reference key="6">
    <citation type="journal article" date="2001" name="Mol. Biol. Cell">
        <title>A genomic study of the bipolar bud site selection pattern in Saccharomyces cerevisiae.</title>
        <authorList>
            <person name="Ni L."/>
            <person name="Snyder M."/>
        </authorList>
    </citation>
    <scope>FUNCTION</scope>
</reference>
<reference key="7">
    <citation type="journal article" date="2002" name="Eukaryot. Cell">
        <title>The Glc7p-interacting protein Bud14p attenuates polarized growth, pheromone response, and filamentous growth in Saccharomyces cerevisiae.</title>
        <authorList>
            <person name="Cullen P.J."/>
            <person name="Sprague G.F. Jr."/>
        </authorList>
    </citation>
    <scope>INTERACTION WITH GLC7</scope>
</reference>
<reference key="8">
    <citation type="journal article" date="2003" name="Nature">
        <title>Global analysis of protein expression in yeast.</title>
        <authorList>
            <person name="Ghaemmaghami S."/>
            <person name="Huh W.-K."/>
            <person name="Bower K."/>
            <person name="Howson R.W."/>
            <person name="Belle A."/>
            <person name="Dephoure N."/>
            <person name="O'Shea E.K."/>
            <person name="Weissman J.S."/>
        </authorList>
    </citation>
    <scope>LEVEL OF PROTEIN EXPRESSION [LARGE SCALE ANALYSIS]</scope>
</reference>
<reference key="9">
    <citation type="journal article" date="2005" name="EMBO J.">
        <title>The Bud14p-Glc7p complex functions as a cortical regulator of dynein in budding yeast.</title>
        <authorList>
            <person name="Knaus M."/>
            <person name="Cameroni E."/>
            <person name="Pedruzzi I."/>
            <person name="Tatchell K."/>
            <person name="De Virgilio C."/>
            <person name="Peter M."/>
        </authorList>
    </citation>
    <scope>FUNCTION</scope>
    <scope>INTERACTION WITH GLC7</scope>
    <scope>FUNCTION OF THE BUD14-GLC7 COMPLEX</scope>
</reference>
<reference key="10">
    <citation type="journal article" date="2007" name="J. Proteome Res.">
        <title>Large-scale phosphorylation analysis of alpha-factor-arrested Saccharomyces cerevisiae.</title>
        <authorList>
            <person name="Li X."/>
            <person name="Gerber S.A."/>
            <person name="Rudner A.D."/>
            <person name="Beausoleil S.A."/>
            <person name="Haas W."/>
            <person name="Villen J."/>
            <person name="Elias J.E."/>
            <person name="Gygi S.P."/>
        </authorList>
    </citation>
    <scope>PHOSPHORYLATION [LARGE SCALE ANALYSIS] AT SER-212; SER-222 AND SER-658</scope>
    <scope>IDENTIFICATION BY MASS SPECTROMETRY [LARGE SCALE ANALYSIS]</scope>
    <source>
        <strain>ADR376</strain>
    </source>
</reference>
<reference key="11">
    <citation type="journal article" date="2008" name="Mol. Cell. Proteomics">
        <title>A multidimensional chromatography technology for in-depth phosphoproteome analysis.</title>
        <authorList>
            <person name="Albuquerque C.P."/>
            <person name="Smolka M.B."/>
            <person name="Payne S.H."/>
            <person name="Bafna V."/>
            <person name="Eng J."/>
            <person name="Zhou H."/>
        </authorList>
    </citation>
    <scope>PHOSPHORYLATION [LARGE SCALE ANALYSIS] AT SER-160; SER-376 AND SER-378</scope>
    <scope>IDENTIFICATION BY MASS SPECTROMETRY [LARGE SCALE ANALYSIS]</scope>
</reference>
<reference key="12">
    <citation type="journal article" date="2009" name="Science">
        <title>Global analysis of Cdk1 substrate phosphorylation sites provides insights into evolution.</title>
        <authorList>
            <person name="Holt L.J."/>
            <person name="Tuch B.B."/>
            <person name="Villen J."/>
            <person name="Johnson A.D."/>
            <person name="Gygi S.P."/>
            <person name="Morgan D.O."/>
        </authorList>
    </citation>
    <scope>PHOSPHORYLATION [LARGE SCALE ANALYSIS] AT TYR-159; SER-160; SER-162; THR-177; SER-212; SER-222; SER-376; SER-378; SER-401; SER-507; SER-655; SER-658 AND SER-670</scope>
    <scope>IDENTIFICATION BY MASS SPECTROMETRY [LARGE SCALE ANALYSIS]</scope>
</reference>
<reference key="13">
    <citation type="journal article" date="2012" name="Proc. Natl. Acad. Sci. U.S.A.">
        <title>N-terminal acetylome analyses and functional insights of the N-terminal acetyltransferase NatB.</title>
        <authorList>
            <person name="Van Damme P."/>
            <person name="Lasa M."/>
            <person name="Polevoda B."/>
            <person name="Gazquez C."/>
            <person name="Elosegui-Artola A."/>
            <person name="Kim D.S."/>
            <person name="De Juan-Pardo E."/>
            <person name="Demeyer K."/>
            <person name="Hole K."/>
            <person name="Larrea E."/>
            <person name="Timmerman E."/>
            <person name="Prieto J."/>
            <person name="Arnesen T."/>
            <person name="Sherman F."/>
            <person name="Gevaert K."/>
            <person name="Aldabe R."/>
        </authorList>
    </citation>
    <scope>ACETYLATION [LARGE SCALE ANALYSIS] AT SER-2</scope>
    <scope>CLEAVAGE OF INITIATOR METHIONINE [LARGE SCALE ANALYSIS]</scope>
    <scope>IDENTIFICATION BY MASS SPECTROMETRY [LARGE SCALE ANALYSIS]</scope>
</reference>
<name>BUD14_YEAST</name>
<comment type="function">
    <text evidence="3 6">Important for bud site selection. Seems to be a regulatory subunit of the BUD14-GLC7 type-I phosphatase complex. The BUD14-GLC7 complex is necessary to regulate microtubule dynamics at the cortex and may function as a specific activator of the dynein complex.</text>
</comment>
<comment type="subunit">
    <text evidence="4 6">Interacts with GLC7.</text>
</comment>
<comment type="interaction">
    <interactant intactId="EBI-20747">
        <id>P27637</id>
    </interactant>
    <interactant intactId="EBI-3517">
        <id>P39960</id>
        <label>BEM2</label>
    </interactant>
    <organismsDiffer>false</organismsDiffer>
    <experiments>4</experiments>
</comment>
<comment type="interaction">
    <interactant intactId="EBI-20747">
        <id>P27637</id>
    </interactant>
    <interactant intactId="EBI-13715">
        <id>P32598</id>
        <label>GLC7</label>
    </interactant>
    <organismsDiffer>false</organismsDiffer>
    <experiments>8</experiments>
</comment>
<comment type="interaction">
    <interactant intactId="EBI-20747">
        <id>P27637</id>
    </interactant>
    <interactant intactId="EBI-9723">
        <id>P13186</id>
        <label>KIN2</label>
    </interactant>
    <organismsDiffer>false</organismsDiffer>
    <experiments>4</experiments>
</comment>
<comment type="miscellaneous">
    <text evidence="5">Present with 538 molecules/cell in log phase SD medium.</text>
</comment>
<gene>
    <name type="primary">BUD14</name>
    <name type="ordered locus">YAR014C</name>
    <name type="ORF">FUN2</name>
</gene>
<proteinExistence type="evidence at protein level"/>
<organism>
    <name type="scientific">Saccharomyces cerevisiae (strain ATCC 204508 / S288c)</name>
    <name type="common">Baker's yeast</name>
    <dbReference type="NCBI Taxonomy" id="559292"/>
    <lineage>
        <taxon>Eukaryota</taxon>
        <taxon>Fungi</taxon>
        <taxon>Dikarya</taxon>
        <taxon>Ascomycota</taxon>
        <taxon>Saccharomycotina</taxon>
        <taxon>Saccharomycetes</taxon>
        <taxon>Saccharomycetales</taxon>
        <taxon>Saccharomycetaceae</taxon>
        <taxon>Saccharomyces</taxon>
    </lineage>
</organism>
<keyword id="KW-0007">Acetylation</keyword>
<keyword id="KW-0131">Cell cycle</keyword>
<keyword id="KW-0132">Cell division</keyword>
<keyword id="KW-0597">Phosphoprotein</keyword>
<keyword id="KW-1185">Reference proteome</keyword>
<keyword id="KW-0728">SH3 domain</keyword>
<feature type="initiator methionine" description="Removed" evidence="11">
    <location>
        <position position="1"/>
    </location>
</feature>
<feature type="chain" id="PRO_0000065012" description="Bud site selection protein 14">
    <location>
        <begin position="2"/>
        <end position="707"/>
    </location>
</feature>
<feature type="domain" description="SH3" evidence="1">
    <location>
        <begin position="259"/>
        <end position="320"/>
    </location>
</feature>
<feature type="region of interest" description="Disordered" evidence="2">
    <location>
        <begin position="61"/>
        <end position="258"/>
    </location>
</feature>
<feature type="region of interest" description="Disordered" evidence="2">
    <location>
        <begin position="334"/>
        <end position="367"/>
    </location>
</feature>
<feature type="region of interest" description="Disordered" evidence="2">
    <location>
        <begin position="396"/>
        <end position="421"/>
    </location>
</feature>
<feature type="region of interest" description="Disordered" evidence="2">
    <location>
        <begin position="464"/>
        <end position="510"/>
    </location>
</feature>
<feature type="region of interest" description="Disordered" evidence="2">
    <location>
        <begin position="525"/>
        <end position="571"/>
    </location>
</feature>
<feature type="region of interest" description="Disordered" evidence="2">
    <location>
        <begin position="600"/>
        <end position="680"/>
    </location>
</feature>
<feature type="compositionally biased region" description="Polar residues" evidence="2">
    <location>
        <begin position="62"/>
        <end position="74"/>
    </location>
</feature>
<feature type="compositionally biased region" description="Polar residues" evidence="2">
    <location>
        <begin position="89"/>
        <end position="107"/>
    </location>
</feature>
<feature type="compositionally biased region" description="Basic and acidic residues" evidence="2">
    <location>
        <begin position="111"/>
        <end position="123"/>
    </location>
</feature>
<feature type="compositionally biased region" description="Basic and acidic residues" evidence="2">
    <location>
        <begin position="131"/>
        <end position="150"/>
    </location>
</feature>
<feature type="compositionally biased region" description="Acidic residues" evidence="2">
    <location>
        <begin position="212"/>
        <end position="226"/>
    </location>
</feature>
<feature type="compositionally biased region" description="Acidic residues" evidence="2">
    <location>
        <begin position="396"/>
        <end position="406"/>
    </location>
</feature>
<feature type="compositionally biased region" description="Basic and acidic residues" evidence="2">
    <location>
        <begin position="470"/>
        <end position="504"/>
    </location>
</feature>
<feature type="compositionally biased region" description="Polar residues" evidence="2">
    <location>
        <begin position="531"/>
        <end position="552"/>
    </location>
</feature>
<feature type="compositionally biased region" description="Low complexity" evidence="2">
    <location>
        <begin position="553"/>
        <end position="569"/>
    </location>
</feature>
<feature type="compositionally biased region" description="Polar residues" evidence="2">
    <location>
        <begin position="600"/>
        <end position="614"/>
    </location>
</feature>
<feature type="compositionally biased region" description="Basic and acidic residues" evidence="2">
    <location>
        <begin position="615"/>
        <end position="633"/>
    </location>
</feature>
<feature type="compositionally biased region" description="Low complexity" evidence="2">
    <location>
        <begin position="655"/>
        <end position="671"/>
    </location>
</feature>
<feature type="modified residue" description="N-acetylserine" evidence="11">
    <location>
        <position position="2"/>
    </location>
</feature>
<feature type="modified residue" description="Phosphotyrosine" evidence="10">
    <location>
        <position position="159"/>
    </location>
</feature>
<feature type="modified residue" description="Phosphoserine" evidence="9 10">
    <location>
        <position position="160"/>
    </location>
</feature>
<feature type="modified residue" description="Phosphoserine" evidence="10">
    <location>
        <position position="162"/>
    </location>
</feature>
<feature type="modified residue" description="Phosphothreonine" evidence="10">
    <location>
        <position position="177"/>
    </location>
</feature>
<feature type="modified residue" description="Phosphoserine" evidence="8 10">
    <location>
        <position position="212"/>
    </location>
</feature>
<feature type="modified residue" description="Phosphoserine" evidence="8 10">
    <location>
        <position position="222"/>
    </location>
</feature>
<feature type="modified residue" description="Phosphoserine" evidence="9 10">
    <location>
        <position position="376"/>
    </location>
</feature>
<feature type="modified residue" description="Phosphoserine" evidence="9 10">
    <location>
        <position position="378"/>
    </location>
</feature>
<feature type="modified residue" description="Phosphoserine" evidence="10">
    <location>
        <position position="401"/>
    </location>
</feature>
<feature type="modified residue" description="Phosphoserine" evidence="10">
    <location>
        <position position="507"/>
    </location>
</feature>
<feature type="modified residue" description="Phosphoserine" evidence="10">
    <location>
        <position position="655"/>
    </location>
</feature>
<feature type="modified residue" description="Phosphoserine" evidence="8 10">
    <location>
        <position position="658"/>
    </location>
</feature>
<feature type="modified residue" description="Phosphoserine" evidence="10">
    <location>
        <position position="670"/>
    </location>
</feature>
<feature type="sequence conflict" description="In Ref. 1; no nucleotide entry and 2; AAC04962." evidence="7" ref="1 2">
    <original>G</original>
    <variation>A</variation>
    <location>
        <position position="439"/>
    </location>
</feature>
<feature type="sequence conflict" description="In Ref. 1; no nucleotide entry and 2; AAC04962." evidence="7" ref="1 2">
    <original>KDISQYIHAKSKIEETTNVENTE</original>
    <variation>RTFTYIMQNRKLRDNKRGKHR</variation>
    <location>
        <begin position="573"/>
        <end position="595"/>
    </location>
</feature>
<feature type="sequence conflict" description="In Ref. 1; no nucleotide entry and 2; AAC04962." evidence="7" ref="1 2">
    <original>A</original>
    <variation>P</variation>
    <location>
        <position position="609"/>
    </location>
</feature>
<dbReference type="EMBL" id="L22015">
    <property type="protein sequence ID" value="AAC04962.2"/>
    <property type="molecule type" value="Genomic_DNA"/>
</dbReference>
<dbReference type="EMBL" id="M67445">
    <property type="protein sequence ID" value="AAA34397.1"/>
    <property type="molecule type" value="Genomic_DNA"/>
</dbReference>
<dbReference type="EMBL" id="BK006935">
    <property type="protein sequence ID" value="DAA06993.2"/>
    <property type="molecule type" value="Genomic_DNA"/>
</dbReference>
<dbReference type="PIR" id="S40904">
    <property type="entry name" value="S40904"/>
</dbReference>
<dbReference type="RefSeq" id="NP_009408.3">
    <property type="nucleotide sequence ID" value="NM_001178215.2"/>
</dbReference>
<dbReference type="SMR" id="P27637"/>
<dbReference type="BioGRID" id="31798">
    <property type="interactions" value="358"/>
</dbReference>
<dbReference type="ComplexPortal" id="CPX-1705">
    <property type="entry name" value="BUD14-GLC7 phosphatase complex"/>
</dbReference>
<dbReference type="ComplexPortal" id="CPX-36">
    <property type="entry name" value="Kelch-containing Formin Regulatory Complex"/>
</dbReference>
<dbReference type="DIP" id="DIP-1756N"/>
<dbReference type="FunCoup" id="P27637">
    <property type="interactions" value="439"/>
</dbReference>
<dbReference type="IntAct" id="P27637">
    <property type="interactions" value="102"/>
</dbReference>
<dbReference type="MINT" id="P27637"/>
<dbReference type="STRING" id="4932.YAR014C"/>
<dbReference type="GlyGen" id="P27637">
    <property type="glycosylation" value="1 site"/>
</dbReference>
<dbReference type="iPTMnet" id="P27637"/>
<dbReference type="PaxDb" id="4932-YAR014C"/>
<dbReference type="PeptideAtlas" id="P27637"/>
<dbReference type="EnsemblFungi" id="YAR014C_mRNA">
    <property type="protein sequence ID" value="YAR014C"/>
    <property type="gene ID" value="YAR014C"/>
</dbReference>
<dbReference type="GeneID" id="851271"/>
<dbReference type="KEGG" id="sce:YAR014C"/>
<dbReference type="AGR" id="SGD:S000000069"/>
<dbReference type="SGD" id="S000000069">
    <property type="gene designation" value="BUD14"/>
</dbReference>
<dbReference type="VEuPathDB" id="FungiDB:YAR014C"/>
<dbReference type="eggNOG" id="ENOG502R17J">
    <property type="taxonomic scope" value="Eukaryota"/>
</dbReference>
<dbReference type="GeneTree" id="ENSGT00390000015725"/>
<dbReference type="HOGENOM" id="CLU_024078_0_0_1"/>
<dbReference type="InParanoid" id="P27637"/>
<dbReference type="OMA" id="NCWKNEN"/>
<dbReference type="OrthoDB" id="196165at2759"/>
<dbReference type="BioCyc" id="YEAST:G3O-28873-MONOMER"/>
<dbReference type="BioGRID-ORCS" id="851271">
    <property type="hits" value="5 hits in 10 CRISPR screens"/>
</dbReference>
<dbReference type="PRO" id="PR:P27637"/>
<dbReference type="Proteomes" id="UP000002311">
    <property type="component" value="Chromosome I"/>
</dbReference>
<dbReference type="RNAct" id="P27637">
    <property type="molecule type" value="protein"/>
</dbReference>
<dbReference type="GO" id="GO:0051286">
    <property type="term" value="C:cell tip"/>
    <property type="evidence" value="ECO:0000318"/>
    <property type="project" value="GO_Central"/>
</dbReference>
<dbReference type="GO" id="GO:0005935">
    <property type="term" value="C:cellular bud neck"/>
    <property type="evidence" value="ECO:0000314"/>
    <property type="project" value="SGD"/>
</dbReference>
<dbReference type="GO" id="GO:0005934">
    <property type="term" value="C:cellular bud tip"/>
    <property type="evidence" value="ECO:0000314"/>
    <property type="project" value="SGD"/>
</dbReference>
<dbReference type="GO" id="GO:0005737">
    <property type="term" value="C:cytoplasm"/>
    <property type="evidence" value="ECO:0007005"/>
    <property type="project" value="SGD"/>
</dbReference>
<dbReference type="GO" id="GO:0000131">
    <property type="term" value="C:incipient cellular bud site"/>
    <property type="evidence" value="ECO:0000314"/>
    <property type="project" value="SGD"/>
</dbReference>
<dbReference type="GO" id="GO:1990615">
    <property type="term" value="C:Kelch-containing formin regulatory complex"/>
    <property type="evidence" value="ECO:0000314"/>
    <property type="project" value="SGD"/>
</dbReference>
<dbReference type="GO" id="GO:0015630">
    <property type="term" value="C:microtubule cytoskeleton"/>
    <property type="evidence" value="ECO:0000318"/>
    <property type="project" value="GO_Central"/>
</dbReference>
<dbReference type="GO" id="GO:0005634">
    <property type="term" value="C:nucleus"/>
    <property type="evidence" value="ECO:0007005"/>
    <property type="project" value="SGD"/>
</dbReference>
<dbReference type="GO" id="GO:0000164">
    <property type="term" value="C:protein phosphatase type 1 complex"/>
    <property type="evidence" value="ECO:0000353"/>
    <property type="project" value="ComplexPortal"/>
</dbReference>
<dbReference type="GO" id="GO:0019888">
    <property type="term" value="F:protein phosphatase regulator activity"/>
    <property type="evidence" value="ECO:0000314"/>
    <property type="project" value="SGD"/>
</dbReference>
<dbReference type="GO" id="GO:0000282">
    <property type="term" value="P:cellular bud site selection"/>
    <property type="evidence" value="ECO:0000303"/>
    <property type="project" value="ComplexPortal"/>
</dbReference>
<dbReference type="GO" id="GO:0007010">
    <property type="term" value="P:cytoskeleton organization"/>
    <property type="evidence" value="ECO:0000315"/>
    <property type="project" value="SGD"/>
</dbReference>
<dbReference type="GO" id="GO:0030950">
    <property type="term" value="P:establishment or maintenance of actin cytoskeleton polarity"/>
    <property type="evidence" value="ECO:0000318"/>
    <property type="project" value="GO_Central"/>
</dbReference>
<dbReference type="GO" id="GO:1905047">
    <property type="term" value="P:mitotic spindle pole body organization"/>
    <property type="evidence" value="ECO:0000315"/>
    <property type="project" value="SGD"/>
</dbReference>
<dbReference type="GO" id="GO:0030837">
    <property type="term" value="P:negative regulation of actin filament polymerization"/>
    <property type="evidence" value="ECO:0000314"/>
    <property type="project" value="SGD"/>
</dbReference>
<dbReference type="GO" id="GO:0001100">
    <property type="term" value="P:negative regulation of exit from mitosis"/>
    <property type="evidence" value="ECO:0000315"/>
    <property type="project" value="SGD"/>
</dbReference>
<dbReference type="GO" id="GO:0045944">
    <property type="term" value="P:positive regulation of transcription by RNA polymerase II"/>
    <property type="evidence" value="ECO:0000303"/>
    <property type="project" value="ComplexPortal"/>
</dbReference>
<dbReference type="GO" id="GO:0008104">
    <property type="term" value="P:protein localization"/>
    <property type="evidence" value="ECO:0000318"/>
    <property type="project" value="GO_Central"/>
</dbReference>
<dbReference type="GO" id="GO:0008360">
    <property type="term" value="P:regulation of cell shape"/>
    <property type="evidence" value="ECO:0000316"/>
    <property type="project" value="SGD"/>
</dbReference>
<dbReference type="GO" id="GO:0032465">
    <property type="term" value="P:regulation of cytokinesis"/>
    <property type="evidence" value="ECO:0000316"/>
    <property type="project" value="SGD"/>
</dbReference>
<dbReference type="GO" id="GO:0006355">
    <property type="term" value="P:regulation of DNA-templated transcription"/>
    <property type="evidence" value="ECO:0000314"/>
    <property type="project" value="SGD"/>
</dbReference>
<dbReference type="GO" id="GO:0090337">
    <property type="term" value="P:regulation of formin-nucleated actin cable assembly"/>
    <property type="evidence" value="ECO:0000316"/>
    <property type="project" value="SGD"/>
</dbReference>
<dbReference type="GO" id="GO:0032880">
    <property type="term" value="P:regulation of protein localization"/>
    <property type="evidence" value="ECO:0000314"/>
    <property type="project" value="SGD"/>
</dbReference>
<dbReference type="GO" id="GO:0060627">
    <property type="term" value="P:regulation of vesicle-mediated transport"/>
    <property type="evidence" value="ECO:0000315"/>
    <property type="project" value="SGD"/>
</dbReference>
<dbReference type="FunFam" id="2.30.30.40:FF:000308">
    <property type="entry name" value="Bud site selection protein"/>
    <property type="match status" value="1"/>
</dbReference>
<dbReference type="Gene3D" id="2.30.30.40">
    <property type="entry name" value="SH3 Domains"/>
    <property type="match status" value="1"/>
</dbReference>
<dbReference type="InterPro" id="IPR053039">
    <property type="entry name" value="Polarity_Bud-Selection_Reg"/>
</dbReference>
<dbReference type="InterPro" id="IPR036028">
    <property type="entry name" value="SH3-like_dom_sf"/>
</dbReference>
<dbReference type="InterPro" id="IPR001452">
    <property type="entry name" value="SH3_domain"/>
</dbReference>
<dbReference type="PANTHER" id="PTHR47775">
    <property type="entry name" value="BUD SITE SELECTION PROTEIN 14"/>
    <property type="match status" value="1"/>
</dbReference>
<dbReference type="PANTHER" id="PTHR47775:SF1">
    <property type="entry name" value="BUD SITE SELECTION PROTEIN 14"/>
    <property type="match status" value="1"/>
</dbReference>
<dbReference type="Pfam" id="PF00018">
    <property type="entry name" value="SH3_1"/>
    <property type="match status" value="1"/>
</dbReference>
<dbReference type="SMART" id="SM00326">
    <property type="entry name" value="SH3"/>
    <property type="match status" value="1"/>
</dbReference>
<dbReference type="SUPFAM" id="SSF50044">
    <property type="entry name" value="SH3-domain"/>
    <property type="match status" value="1"/>
</dbReference>
<dbReference type="PROSITE" id="PS50002">
    <property type="entry name" value="SH3"/>
    <property type="match status" value="1"/>
</dbReference>
<evidence type="ECO:0000255" key="1">
    <source>
        <dbReference type="PROSITE-ProRule" id="PRU00192"/>
    </source>
</evidence>
<evidence type="ECO:0000256" key="2">
    <source>
        <dbReference type="SAM" id="MobiDB-lite"/>
    </source>
</evidence>
<evidence type="ECO:0000269" key="3">
    <source>
    </source>
</evidence>
<evidence type="ECO:0000269" key="4">
    <source>
    </source>
</evidence>
<evidence type="ECO:0000269" key="5">
    <source>
    </source>
</evidence>
<evidence type="ECO:0000269" key="6">
    <source>
    </source>
</evidence>
<evidence type="ECO:0000305" key="7"/>
<evidence type="ECO:0007744" key="8">
    <source>
    </source>
</evidence>
<evidence type="ECO:0007744" key="9">
    <source>
    </source>
</evidence>
<evidence type="ECO:0007744" key="10">
    <source>
    </source>
</evidence>
<evidence type="ECO:0007744" key="11">
    <source>
    </source>
</evidence>
<accession>P27637</accession>
<accession>D6VPM3</accession>